<protein>
    <recommendedName>
        <fullName>5-aminolevulinate synthase, erythroid-specific, mitochondrial</fullName>
        <shortName>ALAS-E</shortName>
        <ecNumber evidence="3">2.3.1.37</ecNumber>
    </recommendedName>
    <alternativeName>
        <fullName>5-aminolevulinic acid synthase 2</fullName>
    </alternativeName>
    <alternativeName>
        <fullName>Delta-ALA synthase 2</fullName>
    </alternativeName>
    <alternativeName>
        <fullName>Delta-aminolevulinate synthase 2</fullName>
    </alternativeName>
</protein>
<accession>Q9YHT4</accession>
<accession>Q6NXC5</accession>
<reference key="1">
    <citation type="journal article" date="1998" name="Nat. Genet.">
        <title>Positional cloning of the zebrafish sauternes gene: a model for congenital sideroblastic anaemia.</title>
        <authorList>
            <person name="Brownlie A."/>
            <person name="Donovan A."/>
            <person name="Pratt S.J."/>
            <person name="Paw B.H."/>
            <person name="Oates A.C."/>
            <person name="Brugnara C."/>
            <person name="Witkowska H.E."/>
            <person name="Sassa S."/>
            <person name="Zon L.I."/>
        </authorList>
    </citation>
    <scope>NUCLEOTIDE SEQUENCE [MRNA]</scope>
    <source>
        <tissue>Kidney</tissue>
    </source>
</reference>
<reference key="2">
    <citation type="submission" date="2003-08" db="EMBL/GenBank/DDBJ databases">
        <authorList>
            <consortium name="NIH - Zebrafish Gene Collection (ZGC) project"/>
        </authorList>
    </citation>
    <scope>NUCLEOTIDE SEQUENCE [LARGE SCALE MRNA]</scope>
    <source>
        <tissue>Kidney</tissue>
    </source>
</reference>
<dbReference type="EC" id="2.3.1.37" evidence="3"/>
<dbReference type="EMBL" id="AF095747">
    <property type="protein sequence ID" value="AAC72835.1"/>
    <property type="molecule type" value="mRNA"/>
</dbReference>
<dbReference type="EMBL" id="BC056338">
    <property type="protein sequence ID" value="AAH56338.1"/>
    <property type="molecule type" value="mRNA"/>
</dbReference>
<dbReference type="EMBL" id="BC067149">
    <property type="protein sequence ID" value="AAH67149.1"/>
    <property type="status" value="ALT_INIT"/>
    <property type="molecule type" value="mRNA"/>
</dbReference>
<dbReference type="RefSeq" id="NP_571757.1">
    <property type="nucleotide sequence ID" value="NM_131682.2"/>
</dbReference>
<dbReference type="SMR" id="Q9YHT4"/>
<dbReference type="FunCoup" id="Q9YHT4">
    <property type="interactions" value="1092"/>
</dbReference>
<dbReference type="STRING" id="7955.ENSDARP00000056419"/>
<dbReference type="PaxDb" id="7955-ENSDARP00000056419"/>
<dbReference type="Ensembl" id="ENSDART00000056420">
    <property type="protein sequence ID" value="ENSDARP00000056419"/>
    <property type="gene ID" value="ENSDARG00000038643"/>
</dbReference>
<dbReference type="GeneID" id="64607"/>
<dbReference type="KEGG" id="dre:64607"/>
<dbReference type="AGR" id="ZFIN:ZDB-GENE-001229-1"/>
<dbReference type="CTD" id="212"/>
<dbReference type="ZFIN" id="ZDB-GENE-001229-1">
    <property type="gene designation" value="alas2"/>
</dbReference>
<dbReference type="eggNOG" id="KOG1360">
    <property type="taxonomic scope" value="Eukaryota"/>
</dbReference>
<dbReference type="HOGENOM" id="CLU_015846_6_1_1"/>
<dbReference type="InParanoid" id="Q9YHT4"/>
<dbReference type="OMA" id="DQFFRNK"/>
<dbReference type="OrthoDB" id="10263824at2759"/>
<dbReference type="PhylomeDB" id="Q9YHT4"/>
<dbReference type="TreeFam" id="TF300724"/>
<dbReference type="Reactome" id="R-DRE-189451">
    <property type="pathway name" value="Heme biosynthesis"/>
</dbReference>
<dbReference type="UniPathway" id="UPA00251">
    <property type="reaction ID" value="UER00375"/>
</dbReference>
<dbReference type="PRO" id="PR:Q9YHT4"/>
<dbReference type="Proteomes" id="UP000000437">
    <property type="component" value="Alternate scaffold 8"/>
</dbReference>
<dbReference type="Proteomes" id="UP000000437">
    <property type="component" value="Chromosome 8"/>
</dbReference>
<dbReference type="Bgee" id="ENSDARG00000038643">
    <property type="expression patterns" value="Expressed in spleen and 19 other cell types or tissues"/>
</dbReference>
<dbReference type="GO" id="GO:0005743">
    <property type="term" value="C:mitochondrial inner membrane"/>
    <property type="evidence" value="ECO:0000250"/>
    <property type="project" value="UniProtKB"/>
</dbReference>
<dbReference type="GO" id="GO:0005759">
    <property type="term" value="C:mitochondrial matrix"/>
    <property type="evidence" value="ECO:0007669"/>
    <property type="project" value="InterPro"/>
</dbReference>
<dbReference type="GO" id="GO:0005739">
    <property type="term" value="C:mitochondrion"/>
    <property type="evidence" value="ECO:0000250"/>
    <property type="project" value="UniProtKB"/>
</dbReference>
<dbReference type="GO" id="GO:0003870">
    <property type="term" value="F:5-aminolevulinate synthase activity"/>
    <property type="evidence" value="ECO:0000250"/>
    <property type="project" value="UniProtKB"/>
</dbReference>
<dbReference type="GO" id="GO:0030170">
    <property type="term" value="F:pyridoxal phosphate binding"/>
    <property type="evidence" value="ECO:0007669"/>
    <property type="project" value="InterPro"/>
</dbReference>
<dbReference type="GO" id="GO:0035162">
    <property type="term" value="P:embryonic hemopoiesis"/>
    <property type="evidence" value="ECO:0000315"/>
    <property type="project" value="ZFIN"/>
</dbReference>
<dbReference type="GO" id="GO:0048821">
    <property type="term" value="P:erythrocyte development"/>
    <property type="evidence" value="ECO:0000315"/>
    <property type="project" value="ZFIN"/>
</dbReference>
<dbReference type="GO" id="GO:0030218">
    <property type="term" value="P:erythrocyte differentiation"/>
    <property type="evidence" value="ECO:0000250"/>
    <property type="project" value="UniProtKB"/>
</dbReference>
<dbReference type="GO" id="GO:0006783">
    <property type="term" value="P:heme biosynthetic process"/>
    <property type="evidence" value="ECO:0000315"/>
    <property type="project" value="ZFIN"/>
</dbReference>
<dbReference type="GO" id="GO:0042541">
    <property type="term" value="P:hemoglobin biosynthetic process"/>
    <property type="evidence" value="ECO:0000315"/>
    <property type="project" value="ZFIN"/>
</dbReference>
<dbReference type="GO" id="GO:0020027">
    <property type="term" value="P:hemoglobin metabolic process"/>
    <property type="evidence" value="ECO:0000315"/>
    <property type="project" value="ZFIN"/>
</dbReference>
<dbReference type="GO" id="GO:0006782">
    <property type="term" value="P:protoporphyrinogen IX biosynthetic process"/>
    <property type="evidence" value="ECO:0007669"/>
    <property type="project" value="UniProtKB-UniPathway"/>
</dbReference>
<dbReference type="GO" id="GO:0001666">
    <property type="term" value="P:response to hypoxia"/>
    <property type="evidence" value="ECO:0000250"/>
    <property type="project" value="UniProtKB"/>
</dbReference>
<dbReference type="CDD" id="cd06454">
    <property type="entry name" value="KBL_like"/>
    <property type="match status" value="1"/>
</dbReference>
<dbReference type="FunFam" id="3.90.1150.10:FF:000029">
    <property type="entry name" value="5-aminolevulinate synthase"/>
    <property type="match status" value="1"/>
</dbReference>
<dbReference type="FunFam" id="3.40.640.10:FF:000006">
    <property type="entry name" value="5-aminolevulinate synthase, mitochondrial"/>
    <property type="match status" value="1"/>
</dbReference>
<dbReference type="Gene3D" id="3.90.1150.10">
    <property type="entry name" value="Aspartate Aminotransferase, domain 1"/>
    <property type="match status" value="1"/>
</dbReference>
<dbReference type="Gene3D" id="3.40.640.10">
    <property type="entry name" value="Type I PLP-dependent aspartate aminotransferase-like (Major domain)"/>
    <property type="match status" value="1"/>
</dbReference>
<dbReference type="InterPro" id="IPR010961">
    <property type="entry name" value="4pyrrol_synth_NH2levulA_synth"/>
</dbReference>
<dbReference type="InterPro" id="IPR015118">
    <property type="entry name" value="5aminolev_synth_preseq"/>
</dbReference>
<dbReference type="InterPro" id="IPR001917">
    <property type="entry name" value="Aminotrans_II_pyridoxalP_BS"/>
</dbReference>
<dbReference type="InterPro" id="IPR004839">
    <property type="entry name" value="Aminotransferase_I/II_large"/>
</dbReference>
<dbReference type="InterPro" id="IPR050087">
    <property type="entry name" value="AON_synthase_class-II"/>
</dbReference>
<dbReference type="InterPro" id="IPR015424">
    <property type="entry name" value="PyrdxlP-dep_Trfase"/>
</dbReference>
<dbReference type="InterPro" id="IPR015421">
    <property type="entry name" value="PyrdxlP-dep_Trfase_major"/>
</dbReference>
<dbReference type="InterPro" id="IPR015422">
    <property type="entry name" value="PyrdxlP-dep_Trfase_small"/>
</dbReference>
<dbReference type="NCBIfam" id="TIGR01821">
    <property type="entry name" value="5aminolev_synth"/>
    <property type="match status" value="1"/>
</dbReference>
<dbReference type="PANTHER" id="PTHR13693:SF58">
    <property type="entry name" value="5-AMINOLEVULINATE SYNTHASE, ERYTHROID-SPECIFIC, MITOCHONDRIAL"/>
    <property type="match status" value="1"/>
</dbReference>
<dbReference type="PANTHER" id="PTHR13693">
    <property type="entry name" value="CLASS II AMINOTRANSFERASE/8-AMINO-7-OXONONANOATE SYNTHASE"/>
    <property type="match status" value="1"/>
</dbReference>
<dbReference type="Pfam" id="PF00155">
    <property type="entry name" value="Aminotran_1_2"/>
    <property type="match status" value="1"/>
</dbReference>
<dbReference type="Pfam" id="PF09029">
    <property type="entry name" value="Preseq_ALAS"/>
    <property type="match status" value="1"/>
</dbReference>
<dbReference type="SUPFAM" id="SSF53383">
    <property type="entry name" value="PLP-dependent transferases"/>
    <property type="match status" value="1"/>
</dbReference>
<dbReference type="PROSITE" id="PS00599">
    <property type="entry name" value="AA_TRANSFER_CLASS_2"/>
    <property type="match status" value="1"/>
</dbReference>
<feature type="transit peptide" description="Mitochondrion" evidence="4">
    <location>
        <begin position="1"/>
        <end status="unknown"/>
    </location>
</feature>
<feature type="chain" id="PRO_0000001227" description="5-aminolevulinate synthase, erythroid-specific, mitochondrial">
    <location>
        <begin status="unknown"/>
        <end position="583"/>
    </location>
</feature>
<feature type="active site" evidence="2">
    <location>
        <position position="386"/>
    </location>
</feature>
<feature type="binding site" evidence="2">
    <location>
        <position position="158"/>
    </location>
    <ligand>
        <name>succinyl-CoA</name>
        <dbReference type="ChEBI" id="CHEBI:57292"/>
    </ligand>
</feature>
<feature type="binding site" description="in other chain" evidence="3">
    <location>
        <position position="253"/>
    </location>
    <ligand>
        <name>pyridoxal 5'-phosphate</name>
        <dbReference type="ChEBI" id="CHEBI:597326"/>
        <note>ligand shared between dimeric partners</note>
    </ligand>
</feature>
<feature type="binding site" description="in other chain" evidence="3">
    <location>
        <position position="254"/>
    </location>
    <ligand>
        <name>pyridoxal 5'-phosphate</name>
        <dbReference type="ChEBI" id="CHEBI:597326"/>
        <note>ligand shared between dimeric partners</note>
    </ligand>
</feature>
<feature type="binding site" evidence="2">
    <location>
        <position position="275"/>
    </location>
    <ligand>
        <name>succinyl-CoA</name>
        <dbReference type="ChEBI" id="CHEBI:57292"/>
    </ligand>
</feature>
<feature type="binding site" evidence="2">
    <location>
        <position position="294"/>
    </location>
    <ligand>
        <name>succinyl-CoA</name>
        <dbReference type="ChEBI" id="CHEBI:57292"/>
    </ligand>
</feature>
<feature type="binding site" description="in other chain" evidence="2">
    <location>
        <position position="327"/>
    </location>
    <ligand>
        <name>pyridoxal 5'-phosphate</name>
        <dbReference type="ChEBI" id="CHEBI:597326"/>
        <note>ligand shared between dimeric partners</note>
    </ligand>
</feature>
<feature type="binding site" description="in other chain" evidence="3">
    <location>
        <position position="355"/>
    </location>
    <ligand>
        <name>pyridoxal 5'-phosphate</name>
        <dbReference type="ChEBI" id="CHEBI:597326"/>
        <note>ligand shared between dimeric partners</note>
    </ligand>
</feature>
<feature type="binding site" description="in other chain" evidence="3">
    <location>
        <position position="383"/>
    </location>
    <ligand>
        <name>pyridoxal 5'-phosphate</name>
        <dbReference type="ChEBI" id="CHEBI:597326"/>
        <note>ligand shared between dimeric partners</note>
    </ligand>
</feature>
<feature type="binding site" evidence="3">
    <location>
        <position position="415"/>
    </location>
    <ligand>
        <name>pyridoxal 5'-phosphate</name>
        <dbReference type="ChEBI" id="CHEBI:597326"/>
        <note>ligand shared between dimeric partners</note>
    </ligand>
</feature>
<feature type="binding site" evidence="3">
    <location>
        <position position="416"/>
    </location>
    <ligand>
        <name>pyridoxal 5'-phosphate</name>
        <dbReference type="ChEBI" id="CHEBI:597326"/>
        <note>ligand shared between dimeric partners</note>
    </ligand>
</feature>
<feature type="binding site" evidence="2">
    <location>
        <position position="503"/>
    </location>
    <ligand>
        <name>succinyl-CoA</name>
        <dbReference type="ChEBI" id="CHEBI:57292"/>
    </ligand>
</feature>
<feature type="modified residue" description="N6-(pyridoxal phosphate)lysine" evidence="1">
    <location>
        <position position="386"/>
    </location>
</feature>
<comment type="function">
    <text evidence="3">Catalyzes the pyridoxal 5'-phosphate (PLP)-dependent condensation of succinyl-CoA and glycine to form aminolevulinic acid (ALA), with CoA and CO2 as by-products (By similarity). Contributes significantly to heme formation during erythropoiesis (By similarity).</text>
</comment>
<comment type="catalytic activity">
    <reaction evidence="3">
        <text>succinyl-CoA + glycine + H(+) = 5-aminolevulinate + CO2 + CoA</text>
        <dbReference type="Rhea" id="RHEA:12921"/>
        <dbReference type="ChEBI" id="CHEBI:15378"/>
        <dbReference type="ChEBI" id="CHEBI:16526"/>
        <dbReference type="ChEBI" id="CHEBI:57287"/>
        <dbReference type="ChEBI" id="CHEBI:57292"/>
        <dbReference type="ChEBI" id="CHEBI:57305"/>
        <dbReference type="ChEBI" id="CHEBI:356416"/>
        <dbReference type="EC" id="2.3.1.37"/>
    </reaction>
    <physiologicalReaction direction="left-to-right" evidence="3">
        <dbReference type="Rhea" id="RHEA:12922"/>
    </physiologicalReaction>
</comment>
<comment type="cofactor">
    <cofactor evidence="3">
        <name>pyridoxal 5'-phosphate</name>
        <dbReference type="ChEBI" id="CHEBI:597326"/>
    </cofactor>
</comment>
<comment type="pathway">
    <text evidence="3">Porphyrin-containing compound metabolism; protoporphyrin-IX biosynthesis; 5-aminolevulinate from glycine: step 1/1.</text>
</comment>
<comment type="subunit">
    <text evidence="3">Homodimer.</text>
</comment>
<comment type="subcellular location">
    <subcellularLocation>
        <location evidence="3">Mitochondrion inner membrane</location>
        <topology evidence="3">Peripheral membrane protein</topology>
    </subcellularLocation>
    <text evidence="3">Localizes to the matrix side of the mitochondrion inner membrane.</text>
</comment>
<comment type="domain">
    <text evidence="3">C-terminus is a mobile self-inhibitory loop which interferes directly with active site.</text>
</comment>
<comment type="similarity">
    <text evidence="5">Belongs to the class-II pyridoxal-phosphate-dependent aminotransferase family.</text>
</comment>
<comment type="sequence caution" evidence="5">
    <conflict type="erroneous initiation">
        <sequence resource="EMBL-CDS" id="AAH67149"/>
    </conflict>
    <text>Extended N-terminus.</text>
</comment>
<evidence type="ECO:0000250" key="1">
    <source>
        <dbReference type="UniProtKB" id="P08680"/>
    </source>
</evidence>
<evidence type="ECO:0000250" key="2">
    <source>
        <dbReference type="UniProtKB" id="P18079"/>
    </source>
</evidence>
<evidence type="ECO:0000250" key="3">
    <source>
        <dbReference type="UniProtKB" id="P22557"/>
    </source>
</evidence>
<evidence type="ECO:0000255" key="4"/>
<evidence type="ECO:0000305" key="5"/>
<sequence>MSAFLHHCPFLKSSPGPSARKVATYLNLADRCPIIVRQISAKAAQSSEQNGLLPHKEPKRQLATTATQVAVSMSQSCPFVSSKIGLVKASPQVQEDVQPNLENQDTSGLISSLFSGLQSHQSTGPTHLLQDNFNRPTFSYDEFFTQKIVEKKKDHTYRIFKTVNRFAEVFPFAEDYSIAGRLGSQVSVWCSNDYLGMSRHPRVVKAIGDALKKHGAGAGGTRNISGTSNYHVALENELARLHQKDGALVFSSCFVANDSTLFTLAKMLPGCEIYSDMGNHASMIQGIRNSGAKRFIFRHNDASHLEELLSRSDPLTPKIVAFETVHSMDGAICPLEELCDVAHKYGALTFVDEVHAVGLYGAHGAGVGERDNVMHKIDIVSGTLGKAFGCVGGYIASTAALVDTVRSFAAGFIFTTSLPPMVLAGALESVRVLKSDEGQALRRAHQRNVKHMRQLLLDAGLPVVNCPSHIIPIRVGNAAKNSEVCDILLEKHNIYVQAINYPTVPRGEELLRLAPSPFHNPIMMNYFAEKLLDVWQEVGLPLNGPAQASCTFCDRPLHFDLMSEWEKSYFGNMEPRYITVAAQ</sequence>
<organism>
    <name type="scientific">Danio rerio</name>
    <name type="common">Zebrafish</name>
    <name type="synonym">Brachydanio rerio</name>
    <dbReference type="NCBI Taxonomy" id="7955"/>
    <lineage>
        <taxon>Eukaryota</taxon>
        <taxon>Metazoa</taxon>
        <taxon>Chordata</taxon>
        <taxon>Craniata</taxon>
        <taxon>Vertebrata</taxon>
        <taxon>Euteleostomi</taxon>
        <taxon>Actinopterygii</taxon>
        <taxon>Neopterygii</taxon>
        <taxon>Teleostei</taxon>
        <taxon>Ostariophysi</taxon>
        <taxon>Cypriniformes</taxon>
        <taxon>Danionidae</taxon>
        <taxon>Danioninae</taxon>
        <taxon>Danio</taxon>
    </lineage>
</organism>
<name>HEM0_DANRE</name>
<proteinExistence type="evidence at transcript level"/>
<gene>
    <name type="primary">alas2</name>
    <name type="synonym">alas-e</name>
</gene>
<keyword id="KW-0012">Acyltransferase</keyword>
<keyword id="KW-0350">Heme biosynthesis</keyword>
<keyword id="KW-0472">Membrane</keyword>
<keyword id="KW-0496">Mitochondrion</keyword>
<keyword id="KW-0999">Mitochondrion inner membrane</keyword>
<keyword id="KW-0663">Pyridoxal phosphate</keyword>
<keyword id="KW-1185">Reference proteome</keyword>
<keyword id="KW-0808">Transferase</keyword>
<keyword id="KW-0809">Transit peptide</keyword>